<protein>
    <recommendedName>
        <fullName>NADH-ubiquinone oxidoreductase chain 6</fullName>
        <ecNumber>7.1.1.2</ecNumber>
    </recommendedName>
    <alternativeName>
        <fullName>NADH dehydrogenase subunit 6</fullName>
    </alternativeName>
</protein>
<comment type="function">
    <text evidence="1">Core subunit of the mitochondrial membrane respiratory chain NADH dehydrogenase (Complex I) that is believed to belong to the minimal assembly required for catalysis. Complex I functions in the transfer of electrons from NADH to the respiratory chain. The immediate electron acceptor for the enzyme is believed to be ubiquinone (By similarity).</text>
</comment>
<comment type="catalytic activity">
    <reaction>
        <text>a ubiquinone + NADH + 5 H(+)(in) = a ubiquinol + NAD(+) + 4 H(+)(out)</text>
        <dbReference type="Rhea" id="RHEA:29091"/>
        <dbReference type="Rhea" id="RHEA-COMP:9565"/>
        <dbReference type="Rhea" id="RHEA-COMP:9566"/>
        <dbReference type="ChEBI" id="CHEBI:15378"/>
        <dbReference type="ChEBI" id="CHEBI:16389"/>
        <dbReference type="ChEBI" id="CHEBI:17976"/>
        <dbReference type="ChEBI" id="CHEBI:57540"/>
        <dbReference type="ChEBI" id="CHEBI:57945"/>
        <dbReference type="EC" id="7.1.1.2"/>
    </reaction>
</comment>
<comment type="subcellular location">
    <subcellularLocation>
        <location evidence="3">Mitochondrion membrane</location>
        <topology evidence="3">Multi-pass membrane protein</topology>
    </subcellularLocation>
</comment>
<comment type="similarity">
    <text evidence="3">Belongs to the complex I subunit 6 family.</text>
</comment>
<reference key="1">
    <citation type="journal article" date="1994" name="Curr. Genet.">
        <title>Intragenic rearrangements in the mitochondrial NADH dehydrogenase subunit 6 gene of vertebrates.</title>
        <authorList>
            <person name="Moum T."/>
            <person name="Willassen N.P."/>
            <person name="Johansen S."/>
        </authorList>
    </citation>
    <scope>NUCLEOTIDE SEQUENCE [GENOMIC DNA]</scope>
</reference>
<gene>
    <name type="primary">MT-ND6</name>
    <name type="synonym">MTND6</name>
    <name type="synonym">NADH6</name>
    <name type="synonym">ND6</name>
</gene>
<keyword id="KW-0249">Electron transport</keyword>
<keyword id="KW-0472">Membrane</keyword>
<keyword id="KW-0496">Mitochondrion</keyword>
<keyword id="KW-0520">NAD</keyword>
<keyword id="KW-0679">Respiratory chain</keyword>
<keyword id="KW-1278">Translocase</keyword>
<keyword id="KW-0812">Transmembrane</keyword>
<keyword id="KW-1133">Transmembrane helix</keyword>
<keyword id="KW-0813">Transport</keyword>
<keyword id="KW-0830">Ubiquinone</keyword>
<dbReference type="EC" id="7.1.1.2"/>
<dbReference type="EMBL" id="X73915">
    <property type="protein sequence ID" value="CAA52120.1"/>
    <property type="molecule type" value="Genomic_DNA"/>
</dbReference>
<dbReference type="PIR" id="S44396">
    <property type="entry name" value="S44396"/>
</dbReference>
<dbReference type="SMR" id="P43192"/>
<dbReference type="GO" id="GO:0031966">
    <property type="term" value="C:mitochondrial membrane"/>
    <property type="evidence" value="ECO:0007669"/>
    <property type="project" value="UniProtKB-SubCell"/>
</dbReference>
<dbReference type="GO" id="GO:0008137">
    <property type="term" value="F:NADH dehydrogenase (ubiquinone) activity"/>
    <property type="evidence" value="ECO:0007669"/>
    <property type="project" value="UniProtKB-EC"/>
</dbReference>
<dbReference type="Gene3D" id="1.20.120.1200">
    <property type="entry name" value="NADH-ubiquinone/plastoquinone oxidoreductase chain 6, subunit NuoJ"/>
    <property type="match status" value="1"/>
</dbReference>
<dbReference type="InterPro" id="IPR050269">
    <property type="entry name" value="ComplexI_Subunit6"/>
</dbReference>
<dbReference type="InterPro" id="IPR001457">
    <property type="entry name" value="NADH_UbQ/plastoQ_OxRdtase_su6"/>
</dbReference>
<dbReference type="InterPro" id="IPR042106">
    <property type="entry name" value="Nuo/plastoQ_OxRdtase_6_NuoJ"/>
</dbReference>
<dbReference type="PANTHER" id="PTHR11435">
    <property type="entry name" value="NADH UBIQUINONE OXIDOREDUCTASE SUBUNIT ND6"/>
    <property type="match status" value="1"/>
</dbReference>
<dbReference type="PANTHER" id="PTHR11435:SF1">
    <property type="entry name" value="NADH-UBIQUINONE OXIDOREDUCTASE CHAIN 6"/>
    <property type="match status" value="1"/>
</dbReference>
<dbReference type="Pfam" id="PF00499">
    <property type="entry name" value="Oxidored_q3"/>
    <property type="match status" value="1"/>
</dbReference>
<feature type="chain" id="PRO_0000118235" description="NADH-ubiquinone oxidoreductase chain 6">
    <location>
        <begin position="1"/>
        <end position="173"/>
    </location>
</feature>
<feature type="transmembrane region" description="Helical" evidence="2">
    <location>
        <begin position="1"/>
        <end position="21"/>
    </location>
</feature>
<feature type="transmembrane region" description="Helical" evidence="2">
    <location>
        <begin position="27"/>
        <end position="47"/>
    </location>
</feature>
<feature type="transmembrane region" description="Helical" evidence="2">
    <location>
        <begin position="48"/>
        <end position="68"/>
    </location>
</feature>
<feature type="transmembrane region" description="Helical" evidence="2">
    <location>
        <begin position="87"/>
        <end position="107"/>
    </location>
</feature>
<feature type="transmembrane region" description="Helical" evidence="2">
    <location>
        <begin position="113"/>
        <end position="133"/>
    </location>
</feature>
<feature type="transmembrane region" description="Helical" evidence="2">
    <location>
        <begin position="139"/>
        <end position="159"/>
    </location>
</feature>
<organism>
    <name type="scientific">Alle alle</name>
    <name type="common">Dovekie</name>
    <name type="synonym">Alca alle</name>
    <dbReference type="NCBI Taxonomy" id="28691"/>
    <lineage>
        <taxon>Eukaryota</taxon>
        <taxon>Metazoa</taxon>
        <taxon>Chordata</taxon>
        <taxon>Craniata</taxon>
        <taxon>Vertebrata</taxon>
        <taxon>Euteleostomi</taxon>
        <taxon>Archelosauria</taxon>
        <taxon>Archosauria</taxon>
        <taxon>Dinosauria</taxon>
        <taxon>Saurischia</taxon>
        <taxon>Theropoda</taxon>
        <taxon>Coelurosauria</taxon>
        <taxon>Aves</taxon>
        <taxon>Neognathae</taxon>
        <taxon>Neoaves</taxon>
        <taxon>Charadriiformes</taxon>
        <taxon>Alcidae</taxon>
        <taxon>Alle</taxon>
    </lineage>
</organism>
<proteinExistence type="inferred from homology"/>
<evidence type="ECO:0000250" key="1"/>
<evidence type="ECO:0000255" key="2"/>
<evidence type="ECO:0000305" key="3"/>
<geneLocation type="mitochondrion"/>
<sequence length="173" mass="18338">MTYFVLFLGLCFVLGGLAVASNPSPYYGVVGLVLASIAGCGWLLSLGVSFVSLVLFMVYLGGMLVVFVYSVSLAADPFPEAWGDWRVVGYGVSLITVLVVGVVVGGFVEYWDFGVITVDSVGMFSVRLDFGGVAMFYSCGVGMFLVAGWGLLLTLFVVLELVRGLTRGAIRAV</sequence>
<name>NU6M_ALLAL</name>
<accession>P43192</accession>